<accession>Q6CIF0</accession>
<feature type="chain" id="PRO_0000351010" description="ATP-dependent DNA helicase CHL1">
    <location>
        <begin position="1"/>
        <end position="807"/>
    </location>
</feature>
<feature type="domain" description="Helicase ATP-binding" evidence="4">
    <location>
        <begin position="1"/>
        <end position="415"/>
    </location>
</feature>
<feature type="short sequence motif" description="DEAH box">
    <location>
        <begin position="357"/>
        <end position="360"/>
    </location>
</feature>
<feature type="binding site" evidence="4">
    <location>
        <begin position="37"/>
        <end position="44"/>
    </location>
    <ligand>
        <name>ATP</name>
        <dbReference type="ChEBI" id="CHEBI:30616"/>
    </ligand>
</feature>
<feature type="binding site" evidence="1">
    <location>
        <position position="249"/>
    </location>
    <ligand>
        <name>[4Fe-4S] cluster</name>
        <dbReference type="ChEBI" id="CHEBI:49883"/>
    </ligand>
</feature>
<feature type="binding site" evidence="1">
    <location>
        <position position="266"/>
    </location>
    <ligand>
        <name>[4Fe-4S] cluster</name>
        <dbReference type="ChEBI" id="CHEBI:49883"/>
    </ligand>
</feature>
<feature type="binding site" evidence="1">
    <location>
        <position position="275"/>
    </location>
    <ligand>
        <name>[4Fe-4S] cluster</name>
        <dbReference type="ChEBI" id="CHEBI:49883"/>
    </ligand>
</feature>
<feature type="binding site" evidence="1">
    <location>
        <position position="314"/>
    </location>
    <ligand>
        <name>[4Fe-4S] cluster</name>
        <dbReference type="ChEBI" id="CHEBI:49883"/>
    </ligand>
</feature>
<evidence type="ECO:0000250" key="1">
    <source>
        <dbReference type="UniProtKB" id="P18074"/>
    </source>
</evidence>
<evidence type="ECO:0000250" key="2">
    <source>
        <dbReference type="UniProtKB" id="P22516"/>
    </source>
</evidence>
<evidence type="ECO:0000250" key="3">
    <source>
        <dbReference type="UniProtKB" id="Q96FC9"/>
    </source>
</evidence>
<evidence type="ECO:0000255" key="4">
    <source>
        <dbReference type="PROSITE-ProRule" id="PRU00541"/>
    </source>
</evidence>
<evidence type="ECO:0000305" key="5"/>
<dbReference type="EC" id="5.6.2.3" evidence="3"/>
<dbReference type="EMBL" id="CR382126">
    <property type="protein sequence ID" value="CAG98997.1"/>
    <property type="molecule type" value="Genomic_DNA"/>
</dbReference>
<dbReference type="RefSeq" id="XP_456289.1">
    <property type="nucleotide sequence ID" value="XM_456289.1"/>
</dbReference>
<dbReference type="SMR" id="Q6CIF0"/>
<dbReference type="FunCoup" id="Q6CIF0">
    <property type="interactions" value="1026"/>
</dbReference>
<dbReference type="STRING" id="284590.Q6CIF0"/>
<dbReference type="PaxDb" id="284590-Q6CIF0"/>
<dbReference type="KEGG" id="kla:KLLA0_F27181g"/>
<dbReference type="eggNOG" id="KOG1133">
    <property type="taxonomic scope" value="Eukaryota"/>
</dbReference>
<dbReference type="HOGENOM" id="CLU_006515_2_0_1"/>
<dbReference type="InParanoid" id="Q6CIF0"/>
<dbReference type="OMA" id="QTHQFRD"/>
<dbReference type="Proteomes" id="UP000000598">
    <property type="component" value="Chromosome F"/>
</dbReference>
<dbReference type="GO" id="GO:0005634">
    <property type="term" value="C:nucleus"/>
    <property type="evidence" value="ECO:0007669"/>
    <property type="project" value="UniProtKB-SubCell"/>
</dbReference>
<dbReference type="GO" id="GO:0005524">
    <property type="term" value="F:ATP binding"/>
    <property type="evidence" value="ECO:0007669"/>
    <property type="project" value="UniProtKB-KW"/>
</dbReference>
<dbReference type="GO" id="GO:0016887">
    <property type="term" value="F:ATP hydrolysis activity"/>
    <property type="evidence" value="ECO:0007669"/>
    <property type="project" value="RHEA"/>
</dbReference>
<dbReference type="GO" id="GO:0003677">
    <property type="term" value="F:DNA binding"/>
    <property type="evidence" value="ECO:0007669"/>
    <property type="project" value="UniProtKB-KW"/>
</dbReference>
<dbReference type="GO" id="GO:0003678">
    <property type="term" value="F:DNA helicase activity"/>
    <property type="evidence" value="ECO:0007669"/>
    <property type="project" value="InterPro"/>
</dbReference>
<dbReference type="GO" id="GO:0051536">
    <property type="term" value="F:iron-sulfur cluster binding"/>
    <property type="evidence" value="ECO:0007669"/>
    <property type="project" value="UniProtKB-KW"/>
</dbReference>
<dbReference type="GO" id="GO:0046872">
    <property type="term" value="F:metal ion binding"/>
    <property type="evidence" value="ECO:0007669"/>
    <property type="project" value="UniProtKB-KW"/>
</dbReference>
<dbReference type="GO" id="GO:0006974">
    <property type="term" value="P:DNA damage response"/>
    <property type="evidence" value="ECO:0007669"/>
    <property type="project" value="UniProtKB-ARBA"/>
</dbReference>
<dbReference type="GO" id="GO:0034085">
    <property type="term" value="P:establishment of sister chromatid cohesion"/>
    <property type="evidence" value="ECO:0007669"/>
    <property type="project" value="TreeGrafter"/>
</dbReference>
<dbReference type="GO" id="GO:0006139">
    <property type="term" value="P:nucleobase-containing compound metabolic process"/>
    <property type="evidence" value="ECO:0007669"/>
    <property type="project" value="InterPro"/>
</dbReference>
<dbReference type="CDD" id="cd18788">
    <property type="entry name" value="SF2_C_XPD"/>
    <property type="match status" value="1"/>
</dbReference>
<dbReference type="FunFam" id="3.40.50.300:FF:001372">
    <property type="entry name" value="ATP-dependent DNA helicase chl1"/>
    <property type="match status" value="1"/>
</dbReference>
<dbReference type="Gene3D" id="3.40.50.300">
    <property type="entry name" value="P-loop containing nucleotide triphosphate hydrolases"/>
    <property type="match status" value="3"/>
</dbReference>
<dbReference type="InterPro" id="IPR006555">
    <property type="entry name" value="ATP-dep_Helicase_C"/>
</dbReference>
<dbReference type="InterPro" id="IPR045028">
    <property type="entry name" value="DinG/Rad3-like"/>
</dbReference>
<dbReference type="InterPro" id="IPR002464">
    <property type="entry name" value="DNA/RNA_helicase_DEAH_CS"/>
</dbReference>
<dbReference type="InterPro" id="IPR014013">
    <property type="entry name" value="Helic_SF1/SF2_ATP-bd_DinG/Rad3"/>
</dbReference>
<dbReference type="InterPro" id="IPR006554">
    <property type="entry name" value="Helicase-like_DEXD_c2"/>
</dbReference>
<dbReference type="InterPro" id="IPR027417">
    <property type="entry name" value="P-loop_NTPase"/>
</dbReference>
<dbReference type="InterPro" id="IPR010614">
    <property type="entry name" value="RAD3-like_helicase_DEAD"/>
</dbReference>
<dbReference type="InterPro" id="IPR013020">
    <property type="entry name" value="Rad3/Chl1-like"/>
</dbReference>
<dbReference type="NCBIfam" id="TIGR00604">
    <property type="entry name" value="rad3"/>
    <property type="match status" value="1"/>
</dbReference>
<dbReference type="PANTHER" id="PTHR11472:SF41">
    <property type="entry name" value="ATP-DEPENDENT DNA HELICASE DDX11-RELATED"/>
    <property type="match status" value="1"/>
</dbReference>
<dbReference type="PANTHER" id="PTHR11472">
    <property type="entry name" value="DNA REPAIR DEAD HELICASE RAD3/XP-D SUBFAMILY MEMBER"/>
    <property type="match status" value="1"/>
</dbReference>
<dbReference type="Pfam" id="PF06733">
    <property type="entry name" value="DEAD_2"/>
    <property type="match status" value="1"/>
</dbReference>
<dbReference type="Pfam" id="PF13307">
    <property type="entry name" value="Helicase_C_2"/>
    <property type="match status" value="1"/>
</dbReference>
<dbReference type="SMART" id="SM00488">
    <property type="entry name" value="DEXDc2"/>
    <property type="match status" value="1"/>
</dbReference>
<dbReference type="SMART" id="SM00491">
    <property type="entry name" value="HELICc2"/>
    <property type="match status" value="1"/>
</dbReference>
<dbReference type="SUPFAM" id="SSF52540">
    <property type="entry name" value="P-loop containing nucleoside triphosphate hydrolases"/>
    <property type="match status" value="2"/>
</dbReference>
<dbReference type="PROSITE" id="PS00690">
    <property type="entry name" value="DEAH_ATP_HELICASE"/>
    <property type="match status" value="1"/>
</dbReference>
<dbReference type="PROSITE" id="PS51193">
    <property type="entry name" value="HELICASE_ATP_BIND_2"/>
    <property type="match status" value="1"/>
</dbReference>
<organism>
    <name type="scientific">Kluyveromyces lactis (strain ATCC 8585 / CBS 2359 / DSM 70799 / NBRC 1267 / NRRL Y-1140 / WM37)</name>
    <name type="common">Yeast</name>
    <name type="synonym">Candida sphaerica</name>
    <dbReference type="NCBI Taxonomy" id="284590"/>
    <lineage>
        <taxon>Eukaryota</taxon>
        <taxon>Fungi</taxon>
        <taxon>Dikarya</taxon>
        <taxon>Ascomycota</taxon>
        <taxon>Saccharomycotina</taxon>
        <taxon>Saccharomycetes</taxon>
        <taxon>Saccharomycetales</taxon>
        <taxon>Saccharomycetaceae</taxon>
        <taxon>Kluyveromyces</taxon>
    </lineage>
</organism>
<proteinExistence type="inferred from homology"/>
<protein>
    <recommendedName>
        <fullName evidence="2">ATP-dependent DNA helicase CHL1</fullName>
        <ecNumber evidence="3">5.6.2.3</ecNumber>
    </recommendedName>
    <alternativeName>
        <fullName evidence="2">Chromosome loss protein 1</fullName>
    </alternativeName>
    <alternativeName>
        <fullName evidence="5">DNA 5'-3' helicase CHL1</fullName>
    </alternativeName>
</protein>
<gene>
    <name type="primary">CHL1</name>
    <name type="ordered locus">KLLA0F27181g</name>
</gene>
<reference key="1">
    <citation type="journal article" date="2004" name="Nature">
        <title>Genome evolution in yeasts.</title>
        <authorList>
            <person name="Dujon B."/>
            <person name="Sherman D."/>
            <person name="Fischer G."/>
            <person name="Durrens P."/>
            <person name="Casaregola S."/>
            <person name="Lafontaine I."/>
            <person name="de Montigny J."/>
            <person name="Marck C."/>
            <person name="Neuveglise C."/>
            <person name="Talla E."/>
            <person name="Goffard N."/>
            <person name="Frangeul L."/>
            <person name="Aigle M."/>
            <person name="Anthouard V."/>
            <person name="Babour A."/>
            <person name="Barbe V."/>
            <person name="Barnay S."/>
            <person name="Blanchin S."/>
            <person name="Beckerich J.-M."/>
            <person name="Beyne E."/>
            <person name="Bleykasten C."/>
            <person name="Boisrame A."/>
            <person name="Boyer J."/>
            <person name="Cattolico L."/>
            <person name="Confanioleri F."/>
            <person name="de Daruvar A."/>
            <person name="Despons L."/>
            <person name="Fabre E."/>
            <person name="Fairhead C."/>
            <person name="Ferry-Dumazet H."/>
            <person name="Groppi A."/>
            <person name="Hantraye F."/>
            <person name="Hennequin C."/>
            <person name="Jauniaux N."/>
            <person name="Joyet P."/>
            <person name="Kachouri R."/>
            <person name="Kerrest A."/>
            <person name="Koszul R."/>
            <person name="Lemaire M."/>
            <person name="Lesur I."/>
            <person name="Ma L."/>
            <person name="Muller H."/>
            <person name="Nicaud J.-M."/>
            <person name="Nikolski M."/>
            <person name="Oztas S."/>
            <person name="Ozier-Kalogeropoulos O."/>
            <person name="Pellenz S."/>
            <person name="Potier S."/>
            <person name="Richard G.-F."/>
            <person name="Straub M.-L."/>
            <person name="Suleau A."/>
            <person name="Swennen D."/>
            <person name="Tekaia F."/>
            <person name="Wesolowski-Louvel M."/>
            <person name="Westhof E."/>
            <person name="Wirth B."/>
            <person name="Zeniou-Meyer M."/>
            <person name="Zivanovic Y."/>
            <person name="Bolotin-Fukuhara M."/>
            <person name="Thierry A."/>
            <person name="Bouchier C."/>
            <person name="Caudron B."/>
            <person name="Scarpelli C."/>
            <person name="Gaillardin C."/>
            <person name="Weissenbach J."/>
            <person name="Wincker P."/>
            <person name="Souciet J.-L."/>
        </authorList>
    </citation>
    <scope>NUCLEOTIDE SEQUENCE [LARGE SCALE GENOMIC DNA]</scope>
    <source>
        <strain>ATCC 8585 / CBS 2359 / DSM 70799 / NBRC 1267 / NRRL Y-1140 / WM37</strain>
    </source>
</reference>
<name>CHL1_KLULA</name>
<keyword id="KW-0067">ATP-binding</keyword>
<keyword id="KW-0131">Cell cycle</keyword>
<keyword id="KW-0238">DNA-binding</keyword>
<keyword id="KW-0347">Helicase</keyword>
<keyword id="KW-0378">Hydrolase</keyword>
<keyword id="KW-0408">Iron</keyword>
<keyword id="KW-0411">Iron-sulfur</keyword>
<keyword id="KW-0413">Isomerase</keyword>
<keyword id="KW-0479">Metal-binding</keyword>
<keyword id="KW-0547">Nucleotide-binding</keyword>
<keyword id="KW-0539">Nucleus</keyword>
<keyword id="KW-1185">Reference proteome</keyword>
<comment type="function">
    <text evidence="2">ATP-dependent DNA helicase important for chromosome transmission and normal cell cycle progression in G(2)/M (By similarity). May have a role in changing DNA topology to allow the loading of proteins involved in maintaining sister chromatid cohesion in the vicinity of the centromeres (By similarity). Has a specific role in chromosome segregation during meiosis II (By similarity).</text>
</comment>
<comment type="catalytic activity">
    <reaction evidence="3">
        <text>Couples ATP hydrolysis with the unwinding of duplex DNA at the replication fork by translocating in the 5'-3' direction. This creates two antiparallel DNA single strands (ssDNA). The leading ssDNA polymer is the template for DNA polymerase III holoenzyme which synthesizes a continuous strand.</text>
        <dbReference type="EC" id="5.6.2.3"/>
    </reaction>
</comment>
<comment type="catalytic activity">
    <reaction evidence="3">
        <text>ATP + H2O = ADP + phosphate + H(+)</text>
        <dbReference type="Rhea" id="RHEA:13065"/>
        <dbReference type="ChEBI" id="CHEBI:15377"/>
        <dbReference type="ChEBI" id="CHEBI:15378"/>
        <dbReference type="ChEBI" id="CHEBI:30616"/>
        <dbReference type="ChEBI" id="CHEBI:43474"/>
        <dbReference type="ChEBI" id="CHEBI:456216"/>
        <dbReference type="EC" id="5.6.2.3"/>
    </reaction>
</comment>
<comment type="cofactor">
    <cofactor evidence="1">
        <name>[4Fe-4S] cluster</name>
        <dbReference type="ChEBI" id="CHEBI:49883"/>
    </cofactor>
    <text evidence="1">Binds 1 [4Fe-4S] cluster.</text>
</comment>
<comment type="subcellular location">
    <subcellularLocation>
        <location evidence="2">Nucleus</location>
    </subcellularLocation>
</comment>
<comment type="similarity">
    <text evidence="5">Belongs to the DEAD box helicase family. DEAH subfamily. DDX11/CHL1 sub-subfamily.</text>
</comment>
<sequence>MGKNFHHPYQPYDIQTQLMEHIYELLNSGKKVGIFESPTGTGKTLSLICSTVTWLREHKLEKLNSKVDNDNLSDSTFSSSDDEPEWVNQFYNDKIMKEKSKSLQEYENYLEGLSMSNIKPVLRQLDIGDRKRKKTVPRHIEIEIEDDETNFLPEPYEQDSVSNQNDYEKGQINDEIQKLLAKIDKGYDVKTENNMELKSPLKIYFSSRTHSQLTQFASQLTLPSFPPSSPTLEKERIKFLPLASRKQLCIHAKVSKLKSDLINDACVETVKRQECQFYTNSRDLISSKQFRDYTFSEISDIEDLVQLGHSLHVCPYYSSRTALEGAEIVTLPYQHILSFEIRESLGINLKDSIVIIDEAHNLMDTITSIYSCEISLSDIKICKKLMKIYLNKFKRKLNGKNRVNIMKLMKLLDILQAFIESHFEKGKEISPQSMFRDSNADLLNIHELVTYMRGSKIAYKIDSYADSKLKSDESNTNSVKQPILFKISKFVLSLSNPSFEGSFFFEEGMIIKYMLLEPNQIFKTIVNDSKCVILAGGTMQPTSEFIENLLPFVPSKDIVQFSCNHIIPESNLDTFIVSEGFNFNYESRNNESVMCKLYDFLLELGCRVPHGIVVFFPSYGYLEHVIKFWQLEEIFEKLSMNKRIFYETPGGSDILPQYSSTILDKKKGAFLFSVVGGKLSEGINFQDNLARAVVMVGLPYPNLYSSELLVKKRHIEQKVISAGGSLKDAKSATIEFYENICMKAVNQSIGRAIRHANDYACIYLVDNRYLNNKVQHKLSEWVRKRVKSELKTSEIFAQTSVFFASNR</sequence>